<evidence type="ECO:0000255" key="1">
    <source>
        <dbReference type="HAMAP-Rule" id="MF_01363"/>
    </source>
</evidence>
<evidence type="ECO:0000256" key="2">
    <source>
        <dbReference type="SAM" id="MobiDB-lite"/>
    </source>
</evidence>
<evidence type="ECO:0000305" key="3"/>
<keyword id="KW-0687">Ribonucleoprotein</keyword>
<keyword id="KW-0689">Ribosomal protein</keyword>
<keyword id="KW-0694">RNA-binding</keyword>
<keyword id="KW-0699">rRNA-binding</keyword>
<proteinExistence type="inferred from homology"/>
<organism>
    <name type="scientific">Rhodopseudomonas palustris (strain TIE-1)</name>
    <dbReference type="NCBI Taxonomy" id="395960"/>
    <lineage>
        <taxon>Bacteria</taxon>
        <taxon>Pseudomonadati</taxon>
        <taxon>Pseudomonadota</taxon>
        <taxon>Alphaproteobacteria</taxon>
        <taxon>Hyphomicrobiales</taxon>
        <taxon>Nitrobacteraceae</taxon>
        <taxon>Rhodopseudomonas</taxon>
    </lineage>
</organism>
<accession>B3Q725</accession>
<gene>
    <name evidence="1" type="primary">rplU</name>
    <name type="ordered locus">Rpal_0151</name>
</gene>
<protein>
    <recommendedName>
        <fullName evidence="1">Large ribosomal subunit protein bL21</fullName>
    </recommendedName>
    <alternativeName>
        <fullName evidence="3">50S ribosomal protein L21</fullName>
    </alternativeName>
</protein>
<feature type="chain" id="PRO_1000143842" description="Large ribosomal subunit protein bL21">
    <location>
        <begin position="1"/>
        <end position="126"/>
    </location>
</feature>
<feature type="region of interest" description="Disordered" evidence="2">
    <location>
        <begin position="105"/>
        <end position="126"/>
    </location>
</feature>
<reference key="1">
    <citation type="submission" date="2008-05" db="EMBL/GenBank/DDBJ databases">
        <title>Complete sequence of Rhodopseudomonas palustris TIE-1.</title>
        <authorList>
            <consortium name="US DOE Joint Genome Institute"/>
            <person name="Lucas S."/>
            <person name="Copeland A."/>
            <person name="Lapidus A."/>
            <person name="Glavina del Rio T."/>
            <person name="Dalin E."/>
            <person name="Tice H."/>
            <person name="Pitluck S."/>
            <person name="Chain P."/>
            <person name="Malfatti S."/>
            <person name="Shin M."/>
            <person name="Vergez L."/>
            <person name="Lang D."/>
            <person name="Schmutz J."/>
            <person name="Larimer F."/>
            <person name="Land M."/>
            <person name="Hauser L."/>
            <person name="Kyrpides N."/>
            <person name="Mikhailova N."/>
            <person name="Emerson D."/>
            <person name="Newman D.K."/>
            <person name="Roden E."/>
            <person name="Richardson P."/>
        </authorList>
    </citation>
    <scope>NUCLEOTIDE SEQUENCE [LARGE SCALE GENOMIC DNA]</scope>
    <source>
        <strain>TIE-1</strain>
    </source>
</reference>
<name>RL21_RHOPT</name>
<comment type="function">
    <text evidence="1">This protein binds to 23S rRNA in the presence of protein L20.</text>
</comment>
<comment type="subunit">
    <text evidence="1">Part of the 50S ribosomal subunit. Contacts protein L20.</text>
</comment>
<comment type="similarity">
    <text evidence="1">Belongs to the bacterial ribosomal protein bL21 family.</text>
</comment>
<sequence>MFAVIKTGGRQYRVVPEDVLEVGKIDGDVGSIIQLGEVLVLGGDTPVLGAPTVAGATVAAEVLDHKRGPKVIAFKKRRRKHSKRKRGYRDEITVLRITEILADGKKPSVGPRAKRTKAAPAAEAAE</sequence>
<dbReference type="EMBL" id="CP001096">
    <property type="protein sequence ID" value="ACE98713.1"/>
    <property type="molecule type" value="Genomic_DNA"/>
</dbReference>
<dbReference type="RefSeq" id="WP_011155726.1">
    <property type="nucleotide sequence ID" value="NC_011004.1"/>
</dbReference>
<dbReference type="SMR" id="B3Q725"/>
<dbReference type="GeneID" id="66891161"/>
<dbReference type="KEGG" id="rpt:Rpal_0151"/>
<dbReference type="HOGENOM" id="CLU_061463_1_2_5"/>
<dbReference type="OrthoDB" id="9813334at2"/>
<dbReference type="Proteomes" id="UP000001725">
    <property type="component" value="Chromosome"/>
</dbReference>
<dbReference type="GO" id="GO:0005737">
    <property type="term" value="C:cytoplasm"/>
    <property type="evidence" value="ECO:0007669"/>
    <property type="project" value="UniProtKB-ARBA"/>
</dbReference>
<dbReference type="GO" id="GO:1990904">
    <property type="term" value="C:ribonucleoprotein complex"/>
    <property type="evidence" value="ECO:0007669"/>
    <property type="project" value="UniProtKB-KW"/>
</dbReference>
<dbReference type="GO" id="GO:0005840">
    <property type="term" value="C:ribosome"/>
    <property type="evidence" value="ECO:0007669"/>
    <property type="project" value="UniProtKB-KW"/>
</dbReference>
<dbReference type="GO" id="GO:0019843">
    <property type="term" value="F:rRNA binding"/>
    <property type="evidence" value="ECO:0007669"/>
    <property type="project" value="UniProtKB-UniRule"/>
</dbReference>
<dbReference type="GO" id="GO:0003735">
    <property type="term" value="F:structural constituent of ribosome"/>
    <property type="evidence" value="ECO:0007669"/>
    <property type="project" value="InterPro"/>
</dbReference>
<dbReference type="GO" id="GO:0006412">
    <property type="term" value="P:translation"/>
    <property type="evidence" value="ECO:0007669"/>
    <property type="project" value="UniProtKB-UniRule"/>
</dbReference>
<dbReference type="HAMAP" id="MF_01363">
    <property type="entry name" value="Ribosomal_bL21"/>
    <property type="match status" value="1"/>
</dbReference>
<dbReference type="InterPro" id="IPR028909">
    <property type="entry name" value="bL21-like"/>
</dbReference>
<dbReference type="InterPro" id="IPR036164">
    <property type="entry name" value="bL21-like_sf"/>
</dbReference>
<dbReference type="InterPro" id="IPR001787">
    <property type="entry name" value="Ribosomal_bL21"/>
</dbReference>
<dbReference type="NCBIfam" id="TIGR00061">
    <property type="entry name" value="L21"/>
    <property type="match status" value="1"/>
</dbReference>
<dbReference type="PANTHER" id="PTHR21349">
    <property type="entry name" value="50S RIBOSOMAL PROTEIN L21"/>
    <property type="match status" value="1"/>
</dbReference>
<dbReference type="PANTHER" id="PTHR21349:SF0">
    <property type="entry name" value="LARGE RIBOSOMAL SUBUNIT PROTEIN BL21M"/>
    <property type="match status" value="1"/>
</dbReference>
<dbReference type="Pfam" id="PF00829">
    <property type="entry name" value="Ribosomal_L21p"/>
    <property type="match status" value="1"/>
</dbReference>
<dbReference type="SUPFAM" id="SSF141091">
    <property type="entry name" value="L21p-like"/>
    <property type="match status" value="1"/>
</dbReference>